<organism>
    <name type="scientific">Brucella melitensis biotype 1 (strain ATCC 23456 / CCUG 17765 / NCTC 10094 / 16M)</name>
    <dbReference type="NCBI Taxonomy" id="224914"/>
    <lineage>
        <taxon>Bacteria</taxon>
        <taxon>Pseudomonadati</taxon>
        <taxon>Pseudomonadota</taxon>
        <taxon>Alphaproteobacteria</taxon>
        <taxon>Hyphomicrobiales</taxon>
        <taxon>Brucellaceae</taxon>
        <taxon>Brucella/Ochrobactrum group</taxon>
        <taxon>Brucella</taxon>
    </lineage>
</organism>
<name>MODC_BRUME</name>
<sequence length="359" mass="38912">MSGLTVSIRGRNGAFAIEAGFAAEGGVTALFGHSGAGKTTLLKMIAGTLRPENGRIAVGDFTLFDAQKGINLPPEKRRIGYVFQDARLFAYMSVKRNLTYARWAGHRQATRSFDEVVALLGIGHLLDRRPSTLSGGERQRVAIGRALLSDPALLLLDEPLSSLDHARRQEILPFIERLRDESHVPIVYVSHEIDEVARLADQIVLLSAGRVTASGAAADIFPLIDAESEGGGVLLEGIVSAYDERYKLAEIDLGGASFQLSDAGLKQTMHVRLRVRARDVSIARKIPEAISIRNLLPVTVTGIERGEGPNAHVFLDFRGRRLGARLTRRSVDDLGLSVGDQVVALVKAVSVDRAAIREK</sequence>
<feature type="chain" id="PRO_0000092535" description="Molybdenum import ATP-binding protein ModC">
    <location>
        <begin position="1"/>
        <end position="359"/>
    </location>
</feature>
<feature type="domain" description="ABC transporter" evidence="1">
    <location>
        <begin position="1"/>
        <end position="233"/>
    </location>
</feature>
<feature type="domain" description="Mop" evidence="2">
    <location>
        <begin position="289"/>
        <end position="355"/>
    </location>
</feature>
<feature type="binding site" evidence="1">
    <location>
        <begin position="32"/>
        <end position="39"/>
    </location>
    <ligand>
        <name>ATP</name>
        <dbReference type="ChEBI" id="CHEBI:30616"/>
    </ligand>
</feature>
<keyword id="KW-0067">ATP-binding</keyword>
<keyword id="KW-0997">Cell inner membrane</keyword>
<keyword id="KW-1003">Cell membrane</keyword>
<keyword id="KW-0472">Membrane</keyword>
<keyword id="KW-0500">Molybdenum</keyword>
<keyword id="KW-0547">Nucleotide-binding</keyword>
<keyword id="KW-1278">Translocase</keyword>
<keyword id="KW-0813">Transport</keyword>
<evidence type="ECO:0000255" key="1">
    <source>
        <dbReference type="HAMAP-Rule" id="MF_01705"/>
    </source>
</evidence>
<evidence type="ECO:0000255" key="2">
    <source>
        <dbReference type="PROSITE-ProRule" id="PRU01213"/>
    </source>
</evidence>
<evidence type="ECO:0000305" key="3"/>
<reference key="1">
    <citation type="journal article" date="2002" name="Proc. Natl. Acad. Sci. U.S.A.">
        <title>The genome sequence of the facultative intracellular pathogen Brucella melitensis.</title>
        <authorList>
            <person name="DelVecchio V.G."/>
            <person name="Kapatral V."/>
            <person name="Redkar R.J."/>
            <person name="Patra G."/>
            <person name="Mujer C."/>
            <person name="Los T."/>
            <person name="Ivanova N."/>
            <person name="Anderson I."/>
            <person name="Bhattacharyya A."/>
            <person name="Lykidis A."/>
            <person name="Reznik G."/>
            <person name="Jablonski L."/>
            <person name="Larsen N."/>
            <person name="D'Souza M."/>
            <person name="Bernal A."/>
            <person name="Mazur M."/>
            <person name="Goltsman E."/>
            <person name="Selkov E."/>
            <person name="Elzer P.H."/>
            <person name="Hagius S."/>
            <person name="O'Callaghan D."/>
            <person name="Letesson J.-J."/>
            <person name="Haselkorn R."/>
            <person name="Kyrpides N.C."/>
            <person name="Overbeek R."/>
        </authorList>
    </citation>
    <scope>NUCLEOTIDE SEQUENCE [LARGE SCALE GENOMIC DNA]</scope>
    <source>
        <strain>ATCC 23456 / CCUG 17765 / NCTC 10094 / 16M</strain>
    </source>
</reference>
<dbReference type="EC" id="7.3.2.5" evidence="1"/>
<dbReference type="EMBL" id="AE008918">
    <property type="protein sequence ID" value="AAL53244.1"/>
    <property type="status" value="ALT_INIT"/>
    <property type="molecule type" value="Genomic_DNA"/>
</dbReference>
<dbReference type="PIR" id="AI3509">
    <property type="entry name" value="AI3509"/>
</dbReference>
<dbReference type="RefSeq" id="WP_004681262.1">
    <property type="nucleotide sequence ID" value="NZ_GG703779.1"/>
</dbReference>
<dbReference type="SMR" id="Q8YE15"/>
<dbReference type="GeneID" id="97535690"/>
<dbReference type="KEGG" id="bme:BMEII0003"/>
<dbReference type="KEGG" id="bmel:DK63_2114"/>
<dbReference type="PATRIC" id="fig|224914.52.peg.2215"/>
<dbReference type="eggNOG" id="COG4148">
    <property type="taxonomic scope" value="Bacteria"/>
</dbReference>
<dbReference type="PhylomeDB" id="Q8YE15"/>
<dbReference type="Proteomes" id="UP000000419">
    <property type="component" value="Chromosome II"/>
</dbReference>
<dbReference type="GO" id="GO:0005886">
    <property type="term" value="C:plasma membrane"/>
    <property type="evidence" value="ECO:0007669"/>
    <property type="project" value="UniProtKB-SubCell"/>
</dbReference>
<dbReference type="GO" id="GO:0015412">
    <property type="term" value="F:ABC-type molybdate transporter activity"/>
    <property type="evidence" value="ECO:0007669"/>
    <property type="project" value="UniProtKB-EC"/>
</dbReference>
<dbReference type="GO" id="GO:0005524">
    <property type="term" value="F:ATP binding"/>
    <property type="evidence" value="ECO:0007669"/>
    <property type="project" value="UniProtKB-KW"/>
</dbReference>
<dbReference type="GO" id="GO:0016887">
    <property type="term" value="F:ATP hydrolysis activity"/>
    <property type="evidence" value="ECO:0007669"/>
    <property type="project" value="InterPro"/>
</dbReference>
<dbReference type="Gene3D" id="2.40.50.100">
    <property type="match status" value="1"/>
</dbReference>
<dbReference type="Gene3D" id="3.40.50.300">
    <property type="entry name" value="P-loop containing nucleotide triphosphate hydrolases"/>
    <property type="match status" value="1"/>
</dbReference>
<dbReference type="InterPro" id="IPR003593">
    <property type="entry name" value="AAA+_ATPase"/>
</dbReference>
<dbReference type="InterPro" id="IPR003439">
    <property type="entry name" value="ABC_transporter-like_ATP-bd"/>
</dbReference>
<dbReference type="InterPro" id="IPR017871">
    <property type="entry name" value="ABC_transporter-like_CS"/>
</dbReference>
<dbReference type="InterPro" id="IPR008995">
    <property type="entry name" value="Mo/tungstate-bd_C_term_dom"/>
</dbReference>
<dbReference type="InterPro" id="IPR011868">
    <property type="entry name" value="ModC_ABC_ATP-bd"/>
</dbReference>
<dbReference type="InterPro" id="IPR050334">
    <property type="entry name" value="Molybdenum_import_ModC"/>
</dbReference>
<dbReference type="InterPro" id="IPR004606">
    <property type="entry name" value="Mop_domain"/>
</dbReference>
<dbReference type="InterPro" id="IPR027417">
    <property type="entry name" value="P-loop_NTPase"/>
</dbReference>
<dbReference type="InterPro" id="IPR005116">
    <property type="entry name" value="Transp-assoc_OB_typ1"/>
</dbReference>
<dbReference type="NCBIfam" id="TIGR02142">
    <property type="entry name" value="modC_ABC"/>
    <property type="match status" value="1"/>
</dbReference>
<dbReference type="PANTHER" id="PTHR43514">
    <property type="entry name" value="ABC TRANSPORTER I FAMILY MEMBER 10"/>
    <property type="match status" value="1"/>
</dbReference>
<dbReference type="PANTHER" id="PTHR43514:SF4">
    <property type="entry name" value="ABC TRANSPORTER I FAMILY MEMBER 10"/>
    <property type="match status" value="1"/>
</dbReference>
<dbReference type="Pfam" id="PF00005">
    <property type="entry name" value="ABC_tran"/>
    <property type="match status" value="1"/>
</dbReference>
<dbReference type="Pfam" id="PF03459">
    <property type="entry name" value="TOBE"/>
    <property type="match status" value="1"/>
</dbReference>
<dbReference type="SMART" id="SM00382">
    <property type="entry name" value="AAA"/>
    <property type="match status" value="1"/>
</dbReference>
<dbReference type="SUPFAM" id="SSF50331">
    <property type="entry name" value="MOP-like"/>
    <property type="match status" value="1"/>
</dbReference>
<dbReference type="SUPFAM" id="SSF52540">
    <property type="entry name" value="P-loop containing nucleoside triphosphate hydrolases"/>
    <property type="match status" value="1"/>
</dbReference>
<dbReference type="PROSITE" id="PS00211">
    <property type="entry name" value="ABC_TRANSPORTER_1"/>
    <property type="match status" value="1"/>
</dbReference>
<dbReference type="PROSITE" id="PS50893">
    <property type="entry name" value="ABC_TRANSPORTER_2"/>
    <property type="match status" value="1"/>
</dbReference>
<dbReference type="PROSITE" id="PS51241">
    <property type="entry name" value="MODC"/>
    <property type="match status" value="1"/>
</dbReference>
<dbReference type="PROSITE" id="PS51866">
    <property type="entry name" value="MOP"/>
    <property type="match status" value="1"/>
</dbReference>
<gene>
    <name evidence="1" type="primary">modC</name>
    <name type="ordered locus">BMEII0003</name>
</gene>
<comment type="function">
    <text evidence="1">Part of the ABC transporter complex ModABC involved in molybdenum import. Responsible for energy coupling to the transport system.</text>
</comment>
<comment type="catalytic activity">
    <reaction evidence="1">
        <text>molybdate(out) + ATP + H2O = molybdate(in) + ADP + phosphate + H(+)</text>
        <dbReference type="Rhea" id="RHEA:22020"/>
        <dbReference type="ChEBI" id="CHEBI:15377"/>
        <dbReference type="ChEBI" id="CHEBI:15378"/>
        <dbReference type="ChEBI" id="CHEBI:30616"/>
        <dbReference type="ChEBI" id="CHEBI:36264"/>
        <dbReference type="ChEBI" id="CHEBI:43474"/>
        <dbReference type="ChEBI" id="CHEBI:456216"/>
        <dbReference type="EC" id="7.3.2.5"/>
    </reaction>
</comment>
<comment type="subunit">
    <text evidence="1">The complex is composed of two ATP-binding proteins (ModC), two transmembrane proteins (ModB) and a solute-binding protein (ModA).</text>
</comment>
<comment type="subcellular location">
    <subcellularLocation>
        <location evidence="1">Cell inner membrane</location>
        <topology evidence="1">Peripheral membrane protein</topology>
    </subcellularLocation>
</comment>
<comment type="similarity">
    <text evidence="1">Belongs to the ABC transporter superfamily. Molybdate importer (TC 3.A.1.8) family.</text>
</comment>
<comment type="sequence caution" evidence="3">
    <conflict type="erroneous initiation">
        <sequence resource="EMBL-CDS" id="AAL53244"/>
    </conflict>
</comment>
<proteinExistence type="inferred from homology"/>
<protein>
    <recommendedName>
        <fullName evidence="1">Molybdenum import ATP-binding protein ModC</fullName>
        <ecNumber evidence="1">7.3.2.5</ecNumber>
    </recommendedName>
</protein>
<accession>Q8YE15</accession>